<evidence type="ECO:0000256" key="1">
    <source>
        <dbReference type="SAM" id="MobiDB-lite"/>
    </source>
</evidence>
<evidence type="ECO:0000269" key="2">
    <source>
    </source>
</evidence>
<evidence type="ECO:0000269" key="3">
    <source>
    </source>
</evidence>
<evidence type="ECO:0000269" key="4">
    <source>
    </source>
</evidence>
<evidence type="ECO:0000269" key="5">
    <source>
    </source>
</evidence>
<evidence type="ECO:0000269" key="6">
    <source>
    </source>
</evidence>
<evidence type="ECO:0000269" key="7">
    <source>
    </source>
</evidence>
<evidence type="ECO:0000269" key="8">
    <source>
    </source>
</evidence>
<evidence type="ECO:0000269" key="9">
    <source>
    </source>
</evidence>
<evidence type="ECO:0000269" key="10">
    <source>
    </source>
</evidence>
<evidence type="ECO:0000269" key="11">
    <source>
    </source>
</evidence>
<evidence type="ECO:0000269" key="12">
    <source>
    </source>
</evidence>
<evidence type="ECO:0000269" key="13">
    <source>
    </source>
</evidence>
<evidence type="ECO:0000269" key="14">
    <source>
    </source>
</evidence>
<evidence type="ECO:0000269" key="15">
    <source ref="7"/>
</evidence>
<evidence type="ECO:0000303" key="16">
    <source>
    </source>
</evidence>
<evidence type="ECO:0000305" key="17"/>
<evidence type="ECO:0000312" key="18">
    <source>
        <dbReference type="SGD" id="S000004140"/>
    </source>
</evidence>
<evidence type="ECO:0007744" key="19">
    <source>
        <dbReference type="PDB" id="4V8Y"/>
    </source>
</evidence>
<evidence type="ECO:0007744" key="20">
    <source>
        <dbReference type="PDB" id="4V8Z"/>
    </source>
</evidence>
<evidence type="ECO:0007744" key="21">
    <source>
    </source>
</evidence>
<evidence type="ECO:0007744" key="22">
    <source>
    </source>
</evidence>
<evidence type="ECO:0007744" key="23">
    <source>
    </source>
</evidence>
<evidence type="ECO:0007744" key="24">
    <source>
    </source>
</evidence>
<evidence type="ECO:0007744" key="25">
    <source>
    </source>
</evidence>
<evidence type="ECO:0007829" key="26">
    <source>
        <dbReference type="PDB" id="4U3U"/>
    </source>
</evidence>
<evidence type="ECO:0007829" key="27">
    <source>
        <dbReference type="PDB" id="4U4R"/>
    </source>
</evidence>
<evidence type="ECO:0007829" key="28">
    <source>
        <dbReference type="PDB" id="4U56"/>
    </source>
</evidence>
<reference key="1">
    <citation type="journal article" date="1998" name="Genetics">
        <title>Dhh1p, a putative RNA helicase, associates with the general transcription factors Pop2p and Ccr4p from Saccharomyces cerevisiae.</title>
        <authorList>
            <person name="Hata H."/>
            <person name="Mitsui H."/>
            <person name="Liu H."/>
            <person name="Bai Y."/>
            <person name="Denis C.L."/>
            <person name="Shimizu Y."/>
            <person name="Sakai A."/>
        </authorList>
    </citation>
    <scope>NUCLEOTIDE SEQUENCE [GENOMIC DNA]</scope>
    <source>
        <strain>ATCC 204508 / S288c</strain>
    </source>
</reference>
<reference key="2">
    <citation type="journal article" date="1995" name="Biochim. Biophys. Acta">
        <title>A high dose of the STM1 gene suppresses the temperature sensitivity of the tom1 and htr1 mutants in Saccharomyces cerevisiae.</title>
        <authorList>
            <person name="Utsugi T."/>
            <person name="Toh-e A."/>
            <person name="Kikuchi Y."/>
        </authorList>
    </citation>
    <scope>NUCLEOTIDE SEQUENCE [GENOMIC DNA]</scope>
</reference>
<reference key="3">
    <citation type="journal article" date="1995" name="J. Biol. Chem.">
        <title>A yeast gene product, G4p2, with a specific affinity for quadruplex nucleic acids.</title>
        <authorList>
            <person name="Frantz J.D."/>
            <person name="Gilbert W."/>
        </authorList>
    </citation>
    <scope>NUCLEOTIDE SEQUENCE [GENOMIC DNA]</scope>
    <scope>PROTEIN SEQUENCE OF 122-145 AND 146-170</scope>
    <scope>DNA-BINDING</scope>
</reference>
<reference key="4">
    <citation type="journal article" date="1997" name="Nature">
        <title>The nucleotide sequence of Saccharomyces cerevisiae chromosome XII.</title>
        <authorList>
            <person name="Johnston M."/>
            <person name="Hillier L.W."/>
            <person name="Riles L."/>
            <person name="Albermann K."/>
            <person name="Andre B."/>
            <person name="Ansorge W."/>
            <person name="Benes V."/>
            <person name="Brueckner M."/>
            <person name="Delius H."/>
            <person name="Dubois E."/>
            <person name="Duesterhoeft A."/>
            <person name="Entian K.-D."/>
            <person name="Floeth M."/>
            <person name="Goffeau A."/>
            <person name="Hebling U."/>
            <person name="Heumann K."/>
            <person name="Heuss-Neitzel D."/>
            <person name="Hilbert H."/>
            <person name="Hilger F."/>
            <person name="Kleine K."/>
            <person name="Koetter P."/>
            <person name="Louis E.J."/>
            <person name="Messenguy F."/>
            <person name="Mewes H.-W."/>
            <person name="Miosga T."/>
            <person name="Moestl D."/>
            <person name="Mueller-Auer S."/>
            <person name="Nentwich U."/>
            <person name="Obermaier B."/>
            <person name="Piravandi E."/>
            <person name="Pohl T.M."/>
            <person name="Portetelle D."/>
            <person name="Purnelle B."/>
            <person name="Rechmann S."/>
            <person name="Rieger M."/>
            <person name="Rinke M."/>
            <person name="Rose M."/>
            <person name="Scharfe M."/>
            <person name="Scherens B."/>
            <person name="Scholler P."/>
            <person name="Schwager C."/>
            <person name="Schwarz S."/>
            <person name="Underwood A.P."/>
            <person name="Urrestarazu L.A."/>
            <person name="Vandenbol M."/>
            <person name="Verhasselt P."/>
            <person name="Vierendeels F."/>
            <person name="Voet M."/>
            <person name="Volckaert G."/>
            <person name="Voss H."/>
            <person name="Wambutt R."/>
            <person name="Wedler E."/>
            <person name="Wedler H."/>
            <person name="Zimmermann F.K."/>
            <person name="Zollner A."/>
            <person name="Hani J."/>
            <person name="Hoheisel J.D."/>
        </authorList>
    </citation>
    <scope>NUCLEOTIDE SEQUENCE [LARGE SCALE GENOMIC DNA]</scope>
    <source>
        <strain>ATCC 204508 / S288c</strain>
    </source>
</reference>
<reference key="5">
    <citation type="journal article" date="2014" name="G3 (Bethesda)">
        <title>The reference genome sequence of Saccharomyces cerevisiae: Then and now.</title>
        <authorList>
            <person name="Engel S.R."/>
            <person name="Dietrich F.S."/>
            <person name="Fisk D.G."/>
            <person name="Binkley G."/>
            <person name="Balakrishnan R."/>
            <person name="Costanzo M.C."/>
            <person name="Dwight S.S."/>
            <person name="Hitz B.C."/>
            <person name="Karra K."/>
            <person name="Nash R.S."/>
            <person name="Weng S."/>
            <person name="Wong E.D."/>
            <person name="Lloyd P."/>
            <person name="Skrzypek M.S."/>
            <person name="Miyasato S.R."/>
            <person name="Simison M."/>
            <person name="Cherry J.M."/>
        </authorList>
    </citation>
    <scope>GENOME REANNOTATION</scope>
    <source>
        <strain>ATCC 204508 / S288c</strain>
    </source>
</reference>
<reference key="6">
    <citation type="journal article" date="2007" name="Genome Res.">
        <title>Approaching a complete repository of sequence-verified protein-encoding clones for Saccharomyces cerevisiae.</title>
        <authorList>
            <person name="Hu Y."/>
            <person name="Rolfs A."/>
            <person name="Bhullar B."/>
            <person name="Murthy T.V.S."/>
            <person name="Zhu C."/>
            <person name="Berger M.F."/>
            <person name="Camargo A.A."/>
            <person name="Kelley F."/>
            <person name="McCarron S."/>
            <person name="Jepson D."/>
            <person name="Richardson A."/>
            <person name="Raphael J."/>
            <person name="Moreira D."/>
            <person name="Taycher E."/>
            <person name="Zuo D."/>
            <person name="Mohr S."/>
            <person name="Kane M.F."/>
            <person name="Williamson J."/>
            <person name="Simpson A.J.G."/>
            <person name="Bulyk M.L."/>
            <person name="Harlow E."/>
            <person name="Marsischky G."/>
            <person name="Kolodner R.D."/>
            <person name="LaBaer J."/>
        </authorList>
    </citation>
    <scope>NUCLEOTIDE SEQUENCE [GENOMIC DNA]</scope>
    <source>
        <strain>ATCC 204508 / S288c</strain>
    </source>
</reference>
<reference key="7">
    <citation type="submission" date="2005-06" db="UniProtKB">
        <authorList>
            <person name="Bienvenut W.V."/>
            <person name="Peters C."/>
        </authorList>
    </citation>
    <scope>PROTEIN SEQUENCE OF 2-27; 34-46 AND 263-273</scope>
    <scope>CLEAVAGE OF INITIATOR METHIONINE</scope>
    <scope>ACETYLATION AT SER-2</scope>
    <scope>IDENTIFICATION BY MASS SPECTROMETRY</scope>
</reference>
<reference key="8">
    <citation type="journal article" date="2000" name="J. Biol. Chem.">
        <title>The yeast STM1 gene encodes a purine motif triple helical DNA-binding protein.</title>
        <authorList>
            <person name="Nelson L.D."/>
            <person name="Musso M."/>
            <person name="Van Dyke M.W."/>
        </authorList>
    </citation>
    <scope>PROTEIN SEQUENCE OF 106-114 AND 265-273</scope>
    <scope>DNA-BINDING</scope>
</reference>
<reference key="9">
    <citation type="journal article" date="2004" name="Mem. Inst. Oswaldo Cruz">
        <title>Similarity between the association factor of ribosomal subunits and the protein Stm1p from Saccharomyces cerevisiae.</title>
        <authorList>
            <person name="Correia H."/>
            <person name="Medina R."/>
            <person name="Hernandez A."/>
            <person name="Bustamante E."/>
            <person name="Chakraburtty K."/>
            <person name="Herrera F."/>
        </authorList>
    </citation>
    <scope>PROTEIN SEQUENCE OF 110-137</scope>
</reference>
<reference key="10">
    <citation type="journal article" date="2001" name="Mol. Biol. Cell">
        <title>The proteasomal substrate Stm1 participates in apoptosis-like cell death in yeast.</title>
        <authorList>
            <person name="Ligr M."/>
            <person name="Velten I."/>
            <person name="Froehlich E."/>
            <person name="Madeo F."/>
            <person name="Ledig M."/>
            <person name="Froehlich K.-U."/>
            <person name="Wolf D.H."/>
            <person name="Hilt W."/>
        </authorList>
    </citation>
    <scope>SUBCELLULAR LOCATION</scope>
</reference>
<reference key="11">
    <citation type="journal article" date="2002" name="Mol. Genet. Genomics">
        <title>STM1, a gene which encodes a guanine quadruplex binding protein, interacts with CDC13 in Saccharomyces cerevisiae.</title>
        <authorList>
            <person name="Hayashi N."/>
            <person name="Murakami S."/>
        </authorList>
    </citation>
    <scope>INTERACTION WITH CDC13</scope>
</reference>
<reference key="12">
    <citation type="journal article" date="2003" name="Nature">
        <title>Global analysis of protein expression in yeast.</title>
        <authorList>
            <person name="Ghaemmaghami S."/>
            <person name="Huh W.-K."/>
            <person name="Bower K."/>
            <person name="Howson R.W."/>
            <person name="Belle A."/>
            <person name="Dephoure N."/>
            <person name="O'Shea E.K."/>
            <person name="Weissman J.S."/>
        </authorList>
    </citation>
    <scope>LEVEL OF PROTEIN EXPRESSION [LARGE SCALE ANALYSIS]</scope>
</reference>
<reference key="13">
    <citation type="journal article" date="2004" name="J. Biol. Chem.">
        <title>Stm1p, a G4 quadruplex and purine motif triplex nucleic acid-binding protein, interacts with ribosomes and subtelomeric Y' DNA in Saccharomyces cerevisiae.</title>
        <authorList>
            <person name="Van Dyke M.W."/>
            <person name="Nelson L.D."/>
            <person name="Weilbaecher R.G."/>
            <person name="Mehta D.V."/>
        </authorList>
    </citation>
    <scope>FUNCTION</scope>
    <scope>SUBUNIT</scope>
    <scope>SUBCELLULAR LOCATION</scope>
</reference>
<reference key="14">
    <citation type="journal article" date="2006" name="J. Mol. Biol.">
        <title>Stm1p, a ribosome-associated protein, is important for protein synthesis in Saccharomyces cerevisiae under nutritional stress conditions.</title>
        <authorList>
            <person name="Van Dyke N."/>
            <person name="Baby J."/>
            <person name="Van Dyke M.W."/>
        </authorList>
    </citation>
    <scope>FUNCTION</scope>
    <scope>SUBUNIT</scope>
    <scope>SUBCELLULAR LOCATION</scope>
</reference>
<reference key="15">
    <citation type="journal article" date="2007" name="J. Proteome Res.">
        <title>Large-scale phosphorylation analysis of alpha-factor-arrested Saccharomyces cerevisiae.</title>
        <authorList>
            <person name="Li X."/>
            <person name="Gerber S.A."/>
            <person name="Rudner A.D."/>
            <person name="Beausoleil S.A."/>
            <person name="Haas W."/>
            <person name="Villen J."/>
            <person name="Elias J.E."/>
            <person name="Gygi S.P."/>
        </authorList>
    </citation>
    <scope>PHOSPHORYLATION [LARGE SCALE ANALYSIS] AT SER-118</scope>
    <scope>IDENTIFICATION BY MASS SPECTROMETRY [LARGE SCALE ANALYSIS]</scope>
    <source>
        <strain>ADR376</strain>
    </source>
</reference>
<reference key="16">
    <citation type="journal article" date="2007" name="Nucleic Acids Symp. Ser.">
        <title>Location of the triplex DNA-binding domain of Saccharomyces cerevisiae Stm1 protein.</title>
        <authorList>
            <person name="Katayama T."/>
            <person name="Inoue N."/>
            <person name="Torigoe H."/>
        </authorList>
    </citation>
    <scope>FUNCTION</scope>
</reference>
<reference key="17">
    <citation type="journal article" date="2007" name="Proc. Natl. Acad. Sci. U.S.A.">
        <title>Analysis of phosphorylation sites on proteins from Saccharomyces cerevisiae by electron transfer dissociation (ETD) mass spectrometry.</title>
        <authorList>
            <person name="Chi A."/>
            <person name="Huttenhower C."/>
            <person name="Geer L.Y."/>
            <person name="Coon J.J."/>
            <person name="Syka J.E.P."/>
            <person name="Bai D.L."/>
            <person name="Shabanowitz J."/>
            <person name="Burke D.J."/>
            <person name="Troyanskaya O.G."/>
            <person name="Hunt D.F."/>
        </authorList>
    </citation>
    <scope>PHOSPHORYLATION [LARGE SCALE ANALYSIS] AT SER-55 AND SER-229</scope>
    <scope>IDENTIFICATION BY MASS SPECTROMETRY [LARGE SCALE ANALYSIS]</scope>
</reference>
<reference key="18">
    <citation type="journal article" date="2008" name="Mol. Cell. Proteomics">
        <title>A multidimensional chromatography technology for in-depth phosphoproteome analysis.</title>
        <authorList>
            <person name="Albuquerque C.P."/>
            <person name="Smolka M.B."/>
            <person name="Payne S.H."/>
            <person name="Bafna V."/>
            <person name="Eng J."/>
            <person name="Zhou H."/>
        </authorList>
    </citation>
    <scope>PHOSPHORYLATION [LARGE SCALE ANALYSIS] AT SER-118</scope>
    <scope>IDENTIFICATION BY MASS SPECTROMETRY [LARGE SCALE ANALYSIS]</scope>
</reference>
<reference key="19">
    <citation type="journal article" date="2009" name="Nucleic Acids Res.">
        <title>Stm1p alters the ribosome association of eukaryotic elongation factor 3 and affects translation elongation.</title>
        <authorList>
            <person name="Van Dyke N."/>
            <person name="Pickering B.F."/>
            <person name="Van Dyke M.W."/>
        </authorList>
    </citation>
    <scope>FUNCTION</scope>
</reference>
<reference key="20">
    <citation type="journal article" date="2009" name="Science">
        <title>Global analysis of Cdk1 substrate phosphorylation sites provides insights into evolution.</title>
        <authorList>
            <person name="Holt L.J."/>
            <person name="Tuch B.B."/>
            <person name="Villen J."/>
            <person name="Johnson A.D."/>
            <person name="Gygi S.P."/>
            <person name="Morgan D.O."/>
        </authorList>
    </citation>
    <scope>PHOSPHORYLATION [LARGE SCALE ANALYSIS] AT SER-118</scope>
    <scope>IDENTIFICATION BY MASS SPECTROMETRY [LARGE SCALE ANALYSIS]</scope>
</reference>
<reference key="21">
    <citation type="journal article" date="2011" name="RNA">
        <title>Stm1 modulates translation after 80S formation in Saccharomyces cerevisiae.</title>
        <authorList>
            <person name="Balagopal V."/>
            <person name="Parker R."/>
        </authorList>
    </citation>
    <scope>FUNCTION</scope>
</reference>
<reference key="22">
    <citation type="journal article" date="2012" name="Proteomics">
        <title>Sites of ubiquitin attachment in Saccharomyces cerevisiae.</title>
        <authorList>
            <person name="Starita L.M."/>
            <person name="Lo R.S."/>
            <person name="Eng J.K."/>
            <person name="von Haller P.D."/>
            <person name="Fields S."/>
        </authorList>
    </citation>
    <scope>UBIQUITINATION [LARGE SCALE ANALYSIS] AT LYS-46; LYS-121; LYS-171 AND LYS-184</scope>
    <scope>IDENTIFICATION BY MASS SPECTROMETRY [LARGE SCALE ANALYSIS]</scope>
</reference>
<reference key="23">
    <citation type="journal article" date="2013" name="Biochem. Biophys. Res. Commun.">
        <title>The Saccharomyces cerevisiae protein Stm1p facilitates ribosome preservation during quiescence.</title>
        <authorList>
            <person name="Van Dyke N."/>
            <person name="Chanchorn E."/>
            <person name="Van Dyke M.W."/>
        </authorList>
    </citation>
    <scope>FUNCTION</scope>
</reference>
<reference key="24">
    <citation type="journal article" date="2018" name="J. Biochem.">
        <title>Tight interaction of eEF2 in the presence of Stm1 on ribosome.</title>
        <authorList>
            <person name="Hayashi H."/>
            <person name="Nagai R."/>
            <person name="Abe T."/>
            <person name="Wada M."/>
            <person name="Ito K."/>
            <person name="Takeuchi-Tomita N."/>
        </authorList>
    </citation>
    <scope>FUNCTION</scope>
    <scope>INTERACTION WITH EFT1</scope>
</reference>
<reference key="25">
    <citation type="journal article" date="2021" name="Int. J. Mol. Sci.">
        <title>A multi-perspective proximity view on the dynamic head region of the ribosomal 40S subunit.</title>
        <authorList>
            <person name="Schmitt K."/>
            <person name="Kraft A.A."/>
            <person name="Valerius O."/>
        </authorList>
    </citation>
    <scope>FUNCTION</scope>
</reference>
<reference key="26">
    <citation type="journal article" date="2023" name="EMBO J.">
        <title>TORC1 phosphorylates and inhibits the ribosome preservation factor Stm1 to activate dormant ribosomes.</title>
        <authorList>
            <person name="Shetty S."/>
            <person name="Hofstetter J."/>
            <person name="Battaglioni S."/>
            <person name="Ritz D."/>
            <person name="Hall M.N."/>
        </authorList>
    </citation>
    <scope>FUNCTION</scope>
    <scope>RIBOSOME-BINDING</scope>
    <scope>PHOSPHORYLATION AT SER-32; SER-41; SER-45; SER-55; SER-73; THR-181 AND THR-218</scope>
    <scope>MUTAGENESIS OF 41-SER--SER-55</scope>
</reference>
<reference key="27">
    <citation type="journal article" date="2011" name="Science">
        <title>The structure of the eukaryotic ribosome at 3.0 A resolution.</title>
        <authorList>
            <person name="Ben-Shem A."/>
            <person name="Garreau de Loubresse N."/>
            <person name="Melnikov S."/>
            <person name="Jenner L."/>
            <person name="Yusupova G."/>
            <person name="Yusupov M."/>
        </authorList>
    </citation>
    <scope>X-RAY CRYSTALLOGRAPHY (3.00 ANGSTROMS) IN COMPLEX WITH 80S RIBOSOME</scope>
    <scope>FUNCTION</scope>
</reference>
<reference evidence="19 20" key="28">
    <citation type="journal article" date="2013" name="Science">
        <title>Molecular architecture of a eukaryotic translational initiation complex.</title>
        <authorList>
            <person name="Fernandez I.S."/>
            <person name="Bai X.C."/>
            <person name="Hussain T."/>
            <person name="Kelley A.C."/>
            <person name="Lorsch J.R."/>
            <person name="Ramakrishnan V."/>
            <person name="Scheres S.H."/>
        </authorList>
    </citation>
    <scope>STRUCTURE BY ELECTRON MICROSCOPY (4.30 ANGSTROMS) IN COMPLEX WITH RIBOSOME</scope>
</reference>
<reference key="29">
    <citation type="journal article" date="2014" name="Nature">
        <title>Structural basis for the inhibition of the eukaryotic ribosome.</title>
        <authorList>
            <person name="Garreau de Loubresse N."/>
            <person name="Prokhorova I."/>
            <person name="Holtkamp W."/>
            <person name="Rodnina M.V."/>
            <person name="Yusupova G."/>
            <person name="Yusupov M."/>
        </authorList>
    </citation>
    <scope>X-RAY CRYSTALLOGRAPHY (2.80 ANGSTROMS)</scope>
</reference>
<protein>
    <recommendedName>
        <fullName>Suppressor protein STM1</fullName>
    </recommendedName>
    <alternativeName>
        <fullName>3BP1</fullName>
    </alternativeName>
    <alternativeName>
        <fullName>GU4 nucleic-binding protein 2</fullName>
        <shortName>G4p2 protein</shortName>
    </alternativeName>
    <alternativeName>
        <fullName>POP2 multicopy suppressor protein 4</fullName>
    </alternativeName>
    <alternativeName>
        <fullName>Ribosomal subunits association factor</fullName>
        <shortName>AF</shortName>
    </alternativeName>
    <alternativeName>
        <fullName>TOM1 suppressor protein 1</fullName>
    </alternativeName>
    <alternativeName>
        <fullName>Triplex-binding protein 1</fullName>
    </alternativeName>
</protein>
<proteinExistence type="evidence at protein level"/>
<organism>
    <name type="scientific">Saccharomyces cerevisiae (strain ATCC 204508 / S288c)</name>
    <name type="common">Baker's yeast</name>
    <dbReference type="NCBI Taxonomy" id="559292"/>
    <lineage>
        <taxon>Eukaryota</taxon>
        <taxon>Fungi</taxon>
        <taxon>Dikarya</taxon>
        <taxon>Ascomycota</taxon>
        <taxon>Saccharomycotina</taxon>
        <taxon>Saccharomycetes</taxon>
        <taxon>Saccharomycetales</taxon>
        <taxon>Saccharomycetaceae</taxon>
        <taxon>Saccharomyces</taxon>
    </lineage>
</organism>
<feature type="initiator methionine" description="Removed" evidence="15">
    <location>
        <position position="1"/>
    </location>
</feature>
<feature type="chain" id="PRO_0000072278" description="Suppressor protein STM1">
    <location>
        <begin position="2"/>
        <end position="273"/>
    </location>
</feature>
<feature type="region of interest" description="Disordered" evidence="1">
    <location>
        <begin position="1"/>
        <end position="153"/>
    </location>
</feature>
<feature type="region of interest" description="Disordered" evidence="1">
    <location>
        <begin position="219"/>
        <end position="273"/>
    </location>
</feature>
<feature type="compositionally biased region" description="Basic and acidic residues" evidence="1">
    <location>
        <begin position="60"/>
        <end position="77"/>
    </location>
</feature>
<feature type="compositionally biased region" description="Basic and acidic residues" evidence="1">
    <location>
        <begin position="89"/>
        <end position="104"/>
    </location>
</feature>
<feature type="compositionally biased region" description="Basic and acidic residues" evidence="1">
    <location>
        <begin position="111"/>
        <end position="124"/>
    </location>
</feature>
<feature type="compositionally biased region" description="Low complexity" evidence="1">
    <location>
        <begin position="224"/>
        <end position="236"/>
    </location>
</feature>
<feature type="compositionally biased region" description="Low complexity" evidence="1">
    <location>
        <begin position="244"/>
        <end position="257"/>
    </location>
</feature>
<feature type="compositionally biased region" description="Polar residues" evidence="1">
    <location>
        <begin position="258"/>
        <end position="273"/>
    </location>
</feature>
<feature type="modified residue" description="N-acetylserine" evidence="15">
    <location>
        <position position="2"/>
    </location>
</feature>
<feature type="modified residue" description="Phosphoserine; by MTOR" evidence="14">
    <location>
        <position position="32"/>
    </location>
</feature>
<feature type="modified residue" description="Phosphoserine; by MTOR" evidence="14">
    <location>
        <position position="41"/>
    </location>
</feature>
<feature type="modified residue" description="Phosphoserine; by MTOR" evidence="14">
    <location>
        <position position="45"/>
    </location>
</feature>
<feature type="modified residue" description="Phosphoserine" evidence="21">
    <location>
        <position position="55"/>
    </location>
</feature>
<feature type="modified residue" description="Phosphoserine; by MTOR" evidence="14">
    <location>
        <position position="55"/>
    </location>
</feature>
<feature type="modified residue" description="Phosphoserine; by MTOR" evidence="14">
    <location>
        <position position="73"/>
    </location>
</feature>
<feature type="modified residue" description="Phosphoserine" evidence="22 23 24">
    <location>
        <position position="118"/>
    </location>
</feature>
<feature type="modified residue" description="Phosphothreonine; by MTOR" evidence="14">
    <location>
        <position position="181"/>
    </location>
</feature>
<feature type="modified residue" description="Phosphothreonine; by MTOR" evidence="14">
    <location>
        <position position="218"/>
    </location>
</feature>
<feature type="modified residue" description="Phosphoserine" evidence="21">
    <location>
        <position position="229"/>
    </location>
</feature>
<feature type="cross-link" description="Glycyl lysine isopeptide (Lys-Gly) (interchain with G-Cter in ubiquitin)" evidence="25">
    <location>
        <position position="46"/>
    </location>
</feature>
<feature type="cross-link" description="Glycyl lysine isopeptide (Lys-Gly) (interchain with G-Cter in ubiquitin)" evidence="25">
    <location>
        <position position="121"/>
    </location>
</feature>
<feature type="cross-link" description="Glycyl lysine isopeptide (Lys-Gly) (interchain with G-Cter in ubiquitin)" evidence="25">
    <location>
        <position position="171"/>
    </location>
</feature>
<feature type="cross-link" description="Glycyl lysine isopeptide (Lys-Gly) (interchain with G-Cter in ubiquitin)" evidence="25">
    <location>
        <position position="184"/>
    </location>
</feature>
<feature type="mutagenesis site" description="Decreased phosphorylation by mTOR/TOR1, leading to reduced ribosome reactivation in response to nutrient replenishment." evidence="14">
    <original>SADPSKARKNRPRPS</original>
    <variation>AADPAKARKNRPRPA</variation>
    <location>
        <begin position="41"/>
        <end position="55"/>
    </location>
</feature>
<feature type="mutagenesis site" description="Mimics phosphorylation by mTOR/TOR1, leading to decreased ability to mediate ribosome hibernation." evidence="14">
    <original>SADPSKARKNRPRPS</original>
    <variation>EADPEKARKNRPRPE</variation>
    <location>
        <begin position="41"/>
        <end position="55"/>
    </location>
</feature>
<feature type="sequence conflict" description="In Ref. 9; AA sequence." evidence="17" ref="9">
    <original>E</original>
    <variation>Q</variation>
    <location>
        <position position="133"/>
    </location>
</feature>
<feature type="sequence conflict" description="In Ref. 3; AAA70169." evidence="17" ref="3">
    <original>K</original>
    <variation>E</variation>
    <location>
        <position position="171"/>
    </location>
</feature>
<feature type="sequence conflict" description="In Ref. 3; AAA70169." evidence="17" ref="3">
    <original>E</original>
    <variation>G</variation>
    <location>
        <position position="177"/>
    </location>
</feature>
<feature type="helix" evidence="27">
    <location>
        <begin position="44"/>
        <end position="46"/>
    </location>
</feature>
<feature type="helix" evidence="27">
    <location>
        <begin position="56"/>
        <end position="62"/>
    </location>
</feature>
<feature type="helix" evidence="27">
    <location>
        <begin position="67"/>
        <end position="72"/>
    </location>
</feature>
<feature type="helix" evidence="27">
    <location>
        <begin position="78"/>
        <end position="81"/>
    </location>
</feature>
<feature type="strand" evidence="27">
    <location>
        <begin position="92"/>
        <end position="94"/>
    </location>
</feature>
<feature type="strand" evidence="28">
    <location>
        <begin position="96"/>
        <end position="98"/>
    </location>
</feature>
<feature type="helix" evidence="27">
    <location>
        <begin position="103"/>
        <end position="110"/>
    </location>
</feature>
<feature type="helix" evidence="27">
    <location>
        <begin position="113"/>
        <end position="115"/>
    </location>
</feature>
<feature type="helix" evidence="27">
    <location>
        <begin position="116"/>
        <end position="135"/>
    </location>
</feature>
<feature type="turn" evidence="26">
    <location>
        <begin position="136"/>
        <end position="139"/>
    </location>
</feature>
<feature type="helix" evidence="27">
    <location>
        <begin position="156"/>
        <end position="162"/>
    </location>
</feature>
<name>STM1_YEAST</name>
<comment type="function">
    <text evidence="5 6 7 8 9 10 12 13 14">Ribosome preservation factor that protect a small pool of nontranslating, vacant ribosomes in cells under nutrient starvation conditions. Under nutrient-limiting conditions, cells reduce ribosome biogenesis and degrade ribosomes via autophagy (ribophagy) or proteasomal degradation. To avoid excessive degradation during starvation, STM1 binds to and protects 80S ribosomes from proteasomal degradation. Under nutrient-sufficient conditions, TORC1 phosphorylates and inhibits STM1 to prevent formation of dormant 80S ribosomes (PubMed:16580682, PubMed:19666721, PubMed:21460238, PubMed:23206692, PubMed:34769086, PubMed:36691768). Acts as an inhibitor of mRNA translation by promoting ribosome hibernation: clamps the two ribosomal subunits, thereby preventing their dissociation, and inhibits translation by excluding mRNA-binding (PubMed:19666721, PubMed:21460238, PubMed:22096102, PubMed:29069440, PubMed:36691768). Acts via its association with eEF2 (EFT1), promoting ribosome stabilization and storage in an inactive state (PubMed:23206692, PubMed:29069440). May also repress translation by preventing association of eEF3 (YEF3 and HEF3) with ribosomes (PubMed:19666721). Binds specifically G4 quadruplex (these are four-stranded right-handed helices, stabilized by guanine base quartets) and purine motif triplex (characterized by a third, antiparallel purine-rich DNA strand located within the major groove of a homopurine stretch of duplex DNA) nucleic acid structures. These structures may be present at telomeres or in rRNAs (PubMed:15044472). Acts with CDC13 to control telomere length homeostasis (PubMed:15044472). Involved in the control of the apoptosis-like cell death (PubMed:15044472).</text>
</comment>
<comment type="subunit">
    <text evidence="3 5 6 9 11 12 14">Associates with mature 80S ribosomes. Binds to the head domain of the 40S ribosomal subunit and prevents mRNA binding by inserting its alpha-helix domain towards the mRNA entry tunnel at the decoding site, where it blocks the binding of tRNA and mRNA at the A- and P-sites (PubMed:15044472, PubMed:16580682, PubMed:22096102, PubMed:24200810, PubMed:36691768). Interacts with EFT1; interaction sequesters EFT1 at the A-site of the ribosome, thereby blocking the interaction sites of the mRNA-tRNA complex, promoting ribosome stabilization and hibernation (PubMed:29069440). Interacts with CDC13 (PubMed:15044472). Associates with the telomere-proximal Y' element (PubMed:12207228).</text>
</comment>
<comment type="interaction">
    <interactant intactId="EBI-11238">
        <id>P39015</id>
    </interactant>
    <interactant intactId="EBI-701">
        <id>P33203</id>
        <label>PRP40</label>
    </interactant>
    <organismsDiffer>false</organismsDiffer>
    <experiments>2</experiments>
</comment>
<comment type="interaction">
    <interactant intactId="EBI-11238">
        <id>P39015</id>
    </interactant>
    <interactant intactId="EBI-16219">
        <id>P39940</id>
        <label>RSP5</label>
    </interactant>
    <organismsDiffer>false</organismsDiffer>
    <experiments>3</experiments>
</comment>
<comment type="subcellular location">
    <subcellularLocation>
        <location evidence="2 5 6">Cytoplasm</location>
    </subcellularLocation>
    <subcellularLocation>
        <location evidence="2">Nucleus</location>
    </subcellularLocation>
    <subcellularLocation>
        <location evidence="2">Cytoplasm</location>
        <location evidence="2">Perinuclear region</location>
    </subcellularLocation>
    <text evidence="2">Concentrated in the perinuclear region.</text>
</comment>
<comment type="PTM">
    <text evidence="14">Phosphorylation by TORC1 upon nutrient replenishment inhibits STM1 and causes its release from dormant ribosomes.</text>
</comment>
<comment type="miscellaneous">
    <text evidence="4">Present with 46842 molecules/cell in log phase SD medium.</text>
</comment>
<comment type="similarity">
    <text evidence="17">Belongs to the SERBP1-HABP4 family.</text>
</comment>
<sequence>MSNPFDLLGNDVEDADVVVLPPKEIVKSNTSSKKADVPPPSADPSKARKNRPRPSGNEGAIRDKTAGRRNNRSKDVTDSATTKKSNTRRATDRHSRTGKTDTKKKVNQGWGDDKKELSAEKEAQADAAAEIAEDAAEAEDAGKPKTAQLSLQDYLNQQANNQFNKVPEAKKVELDAERIETAEKEAYVPATKVKNVKSKQLKTKEYLEFDATFVESNTRKNFGDRNNNSRNNFNNRRGGRGARKGNNTANATNSANTVQKNRNIDVSNLPSLA</sequence>
<keyword id="KW-0002">3D-structure</keyword>
<keyword id="KW-0007">Acetylation</keyword>
<keyword id="KW-0963">Cytoplasm</keyword>
<keyword id="KW-0903">Direct protein sequencing</keyword>
<keyword id="KW-0238">DNA-binding</keyword>
<keyword id="KW-1017">Isopeptide bond</keyword>
<keyword id="KW-0539">Nucleus</keyword>
<keyword id="KW-0597">Phosphoprotein</keyword>
<keyword id="KW-1185">Reference proteome</keyword>
<keyword id="KW-0810">Translation regulation</keyword>
<keyword id="KW-0832">Ubl conjugation</keyword>
<gene>
    <name evidence="16 18" type="primary">STM1</name>
    <name type="synonym">MPT4</name>
    <name type="synonym">STO1</name>
    <name type="ordered locus">YLR150W</name>
    <name type="ORF">L9634.1</name>
</gene>
<accession>P39015</accession>
<accession>D6VYE5</accession>
<dbReference type="EMBL" id="D26183">
    <property type="protein sequence ID" value="BAA05171.1"/>
    <property type="molecule type" value="Genomic_DNA"/>
</dbReference>
<dbReference type="EMBL" id="D32208">
    <property type="protein sequence ID" value="BAA06907.1"/>
    <property type="molecule type" value="Genomic_DNA"/>
</dbReference>
<dbReference type="EMBL" id="U20616">
    <property type="protein sequence ID" value="AAA70169.1"/>
    <property type="molecule type" value="Genomic_DNA"/>
</dbReference>
<dbReference type="EMBL" id="Z73322">
    <property type="protein sequence ID" value="CAA97722.1"/>
    <property type="molecule type" value="Genomic_DNA"/>
</dbReference>
<dbReference type="EMBL" id="U53879">
    <property type="protein sequence ID" value="AAB82384.1"/>
    <property type="molecule type" value="Genomic_DNA"/>
</dbReference>
<dbReference type="EMBL" id="AY557944">
    <property type="protein sequence ID" value="AAS56270.1"/>
    <property type="molecule type" value="Genomic_DNA"/>
</dbReference>
<dbReference type="EMBL" id="BK006945">
    <property type="protein sequence ID" value="DAA09461.1"/>
    <property type="molecule type" value="Genomic_DNA"/>
</dbReference>
<dbReference type="PIR" id="S48511">
    <property type="entry name" value="S48511"/>
</dbReference>
<dbReference type="RefSeq" id="NP_013251.1">
    <property type="nucleotide sequence ID" value="NM_001182037.1"/>
</dbReference>
<dbReference type="PDB" id="4U3M">
    <property type="method" value="X-ray"/>
    <property type="resolution" value="3.00 A"/>
    <property type="chains" value="SM/sM=1-273"/>
</dbReference>
<dbReference type="PDB" id="4U3N">
    <property type="method" value="X-ray"/>
    <property type="resolution" value="3.20 A"/>
    <property type="chains" value="SM/sM=1-273"/>
</dbReference>
<dbReference type="PDB" id="4U3U">
    <property type="method" value="X-ray"/>
    <property type="resolution" value="2.90 A"/>
    <property type="chains" value="SM/sM=1-273"/>
</dbReference>
<dbReference type="PDB" id="4U4N">
    <property type="method" value="X-ray"/>
    <property type="resolution" value="3.10 A"/>
    <property type="chains" value="SM/sM=1-273"/>
</dbReference>
<dbReference type="PDB" id="4U4O">
    <property type="method" value="X-ray"/>
    <property type="resolution" value="3.60 A"/>
    <property type="chains" value="SM/sM=1-273"/>
</dbReference>
<dbReference type="PDB" id="4U4Q">
    <property type="method" value="X-ray"/>
    <property type="resolution" value="3.00 A"/>
    <property type="chains" value="SM/sM=1-273"/>
</dbReference>
<dbReference type="PDB" id="4U4R">
    <property type="method" value="X-ray"/>
    <property type="resolution" value="2.80 A"/>
    <property type="chains" value="SM/sM=1-273"/>
</dbReference>
<dbReference type="PDB" id="4U4U">
    <property type="method" value="X-ray"/>
    <property type="resolution" value="3.00 A"/>
    <property type="chains" value="SM/sM=1-273"/>
</dbReference>
<dbReference type="PDB" id="4U4Y">
    <property type="method" value="X-ray"/>
    <property type="resolution" value="3.20 A"/>
    <property type="chains" value="SM/sM=1-273"/>
</dbReference>
<dbReference type="PDB" id="4U4Z">
    <property type="method" value="X-ray"/>
    <property type="resolution" value="3.10 A"/>
    <property type="chains" value="SM/sM=1-273"/>
</dbReference>
<dbReference type="PDB" id="4U50">
    <property type="method" value="X-ray"/>
    <property type="resolution" value="3.20 A"/>
    <property type="chains" value="SM/sM=1-273"/>
</dbReference>
<dbReference type="PDB" id="4U51">
    <property type="method" value="X-ray"/>
    <property type="resolution" value="3.20 A"/>
    <property type="chains" value="SM/sM=1-273"/>
</dbReference>
<dbReference type="PDB" id="4U52">
    <property type="method" value="X-ray"/>
    <property type="resolution" value="3.00 A"/>
    <property type="chains" value="SM/sM=1-273"/>
</dbReference>
<dbReference type="PDB" id="4U53">
    <property type="method" value="X-ray"/>
    <property type="resolution" value="3.30 A"/>
    <property type="chains" value="SM/sM=1-273"/>
</dbReference>
<dbReference type="PDB" id="4U55">
    <property type="method" value="X-ray"/>
    <property type="resolution" value="3.20 A"/>
    <property type="chains" value="SM/sM=1-273"/>
</dbReference>
<dbReference type="PDB" id="4U56">
    <property type="method" value="X-ray"/>
    <property type="resolution" value="3.45 A"/>
    <property type="chains" value="SM/sM=1-273"/>
</dbReference>
<dbReference type="PDB" id="4U6F">
    <property type="method" value="X-ray"/>
    <property type="resolution" value="3.10 A"/>
    <property type="chains" value="SM/sM=1-273"/>
</dbReference>
<dbReference type="PDB" id="4V88">
    <property type="method" value="X-ray"/>
    <property type="resolution" value="3.00 A"/>
    <property type="chains" value="Ah/Ch=1-273"/>
</dbReference>
<dbReference type="PDB" id="4V8Y">
    <property type="method" value="EM"/>
    <property type="resolution" value="4.30 A"/>
    <property type="chains" value="A7=1-273"/>
</dbReference>
<dbReference type="PDB" id="4V8Z">
    <property type="method" value="EM"/>
    <property type="resolution" value="6.60 A"/>
    <property type="chains" value="A7=1-273"/>
</dbReference>
<dbReference type="PDB" id="5DAT">
    <property type="method" value="X-ray"/>
    <property type="resolution" value="3.15 A"/>
    <property type="chains" value="SM/sM=1-273"/>
</dbReference>
<dbReference type="PDB" id="5DC3">
    <property type="method" value="X-ray"/>
    <property type="resolution" value="3.25 A"/>
    <property type="chains" value="SM/sM=1-273"/>
</dbReference>
<dbReference type="PDB" id="5DGE">
    <property type="method" value="X-ray"/>
    <property type="resolution" value="3.45 A"/>
    <property type="chains" value="SM/sM=1-273"/>
</dbReference>
<dbReference type="PDB" id="5DGF">
    <property type="method" value="X-ray"/>
    <property type="resolution" value="3.30 A"/>
    <property type="chains" value="SM/sM=1-273"/>
</dbReference>
<dbReference type="PDB" id="5FCI">
    <property type="method" value="X-ray"/>
    <property type="resolution" value="3.40 A"/>
    <property type="chains" value="SM/sM=1-141"/>
</dbReference>
<dbReference type="PDB" id="5FCJ">
    <property type="method" value="X-ray"/>
    <property type="resolution" value="3.10 A"/>
    <property type="chains" value="SM/sM=1-141"/>
</dbReference>
<dbReference type="PDB" id="5I4L">
    <property type="method" value="X-ray"/>
    <property type="resolution" value="3.10 A"/>
    <property type="chains" value="SM=1-150, sM=1-118"/>
</dbReference>
<dbReference type="PDB" id="5LYB">
    <property type="method" value="X-ray"/>
    <property type="resolution" value="3.25 A"/>
    <property type="chains" value="SM=9-141, sM=23-85"/>
</dbReference>
<dbReference type="PDB" id="5NDG">
    <property type="method" value="X-ray"/>
    <property type="resolution" value="3.70 A"/>
    <property type="chains" value="SM/sM=2-273"/>
</dbReference>
<dbReference type="PDB" id="5NDV">
    <property type="method" value="X-ray"/>
    <property type="resolution" value="3.30 A"/>
    <property type="chains" value="SM/sM=2-273"/>
</dbReference>
<dbReference type="PDB" id="5NDW">
    <property type="method" value="X-ray"/>
    <property type="resolution" value="3.70 A"/>
    <property type="chains" value="SM/sM=2-273"/>
</dbReference>
<dbReference type="PDB" id="5OBM">
    <property type="method" value="X-ray"/>
    <property type="resolution" value="3.40 A"/>
    <property type="chains" value="SM/sM=2-273"/>
</dbReference>
<dbReference type="PDB" id="5TGA">
    <property type="method" value="X-ray"/>
    <property type="resolution" value="3.30 A"/>
    <property type="chains" value="SM=9-141, sM=23-85"/>
</dbReference>
<dbReference type="PDB" id="5TGM">
    <property type="method" value="X-ray"/>
    <property type="resolution" value="3.50 A"/>
    <property type="chains" value="SM=21-141, sM=23-85"/>
</dbReference>
<dbReference type="PDB" id="6HHQ">
    <property type="method" value="X-ray"/>
    <property type="resolution" value="3.10 A"/>
    <property type="chains" value="i/sM=1-273"/>
</dbReference>
<dbReference type="PDB" id="7MPI">
    <property type="method" value="EM"/>
    <property type="resolution" value="3.05 A"/>
    <property type="chains" value="Bh=53-141"/>
</dbReference>
<dbReference type="PDB" id="7MPJ">
    <property type="method" value="EM"/>
    <property type="resolution" value="2.70 A"/>
    <property type="chains" value="Bh=53-141"/>
</dbReference>
<dbReference type="PDB" id="7N8B">
    <property type="method" value="EM"/>
    <property type="resolution" value="3.05 A"/>
    <property type="chains" value="Bh=53-141"/>
</dbReference>
<dbReference type="PDB" id="8BN3">
    <property type="method" value="EM"/>
    <property type="resolution" value="2.40 A"/>
    <property type="chains" value="SM=21-138"/>
</dbReference>
<dbReference type="PDB" id="8K2D">
    <property type="method" value="EM"/>
    <property type="resolution" value="3.20 A"/>
    <property type="chains" value="CS=1-273"/>
</dbReference>
<dbReference type="PDB" id="8P4V">
    <property type="method" value="X-ray"/>
    <property type="resolution" value="3.16 A"/>
    <property type="chains" value="i/sM=1-273"/>
</dbReference>
<dbReference type="PDB" id="8P9A">
    <property type="method" value="X-ray"/>
    <property type="resolution" value="2.90 A"/>
    <property type="chains" value="i/sM=1-273"/>
</dbReference>
<dbReference type="PDB" id="8Y0U">
    <property type="method" value="EM"/>
    <property type="resolution" value="3.59 A"/>
    <property type="chains" value="s=1-273"/>
</dbReference>
<dbReference type="PDBsum" id="4U3M"/>
<dbReference type="PDBsum" id="4U3N"/>
<dbReference type="PDBsum" id="4U3U"/>
<dbReference type="PDBsum" id="4U4N"/>
<dbReference type="PDBsum" id="4U4O"/>
<dbReference type="PDBsum" id="4U4Q"/>
<dbReference type="PDBsum" id="4U4R"/>
<dbReference type="PDBsum" id="4U4U"/>
<dbReference type="PDBsum" id="4U4Y"/>
<dbReference type="PDBsum" id="4U4Z"/>
<dbReference type="PDBsum" id="4U50"/>
<dbReference type="PDBsum" id="4U51"/>
<dbReference type="PDBsum" id="4U52"/>
<dbReference type="PDBsum" id="4U53"/>
<dbReference type="PDBsum" id="4U55"/>
<dbReference type="PDBsum" id="4U56"/>
<dbReference type="PDBsum" id="4U6F"/>
<dbReference type="PDBsum" id="4V88"/>
<dbReference type="PDBsum" id="4V8Y"/>
<dbReference type="PDBsum" id="4V8Z"/>
<dbReference type="PDBsum" id="5DAT"/>
<dbReference type="PDBsum" id="5DC3"/>
<dbReference type="PDBsum" id="5DGE"/>
<dbReference type="PDBsum" id="5DGF"/>
<dbReference type="PDBsum" id="5FCI"/>
<dbReference type="PDBsum" id="5FCJ"/>
<dbReference type="PDBsum" id="5I4L"/>
<dbReference type="PDBsum" id="5LYB"/>
<dbReference type="PDBsum" id="5NDG"/>
<dbReference type="PDBsum" id="5NDV"/>
<dbReference type="PDBsum" id="5NDW"/>
<dbReference type="PDBsum" id="5OBM"/>
<dbReference type="PDBsum" id="5TGA"/>
<dbReference type="PDBsum" id="5TGM"/>
<dbReference type="PDBsum" id="6HHQ"/>
<dbReference type="PDBsum" id="7MPI"/>
<dbReference type="PDBsum" id="7MPJ"/>
<dbReference type="PDBsum" id="7N8B"/>
<dbReference type="PDBsum" id="8BN3"/>
<dbReference type="PDBsum" id="8K2D"/>
<dbReference type="PDBsum" id="8P4V"/>
<dbReference type="PDBsum" id="8P9A"/>
<dbReference type="PDBsum" id="8Y0U"/>
<dbReference type="EMDB" id="EMD-23934"/>
<dbReference type="EMDB" id="EMD-23935"/>
<dbReference type="EMDB" id="EMD-24235"/>
<dbReference type="EMDB" id="EMD-36839"/>
<dbReference type="SMR" id="P39015"/>
<dbReference type="BioGRID" id="31419">
    <property type="interactions" value="516"/>
</dbReference>
<dbReference type="DIP" id="DIP-1675N"/>
<dbReference type="FunCoup" id="P39015">
    <property type="interactions" value="445"/>
</dbReference>
<dbReference type="IntAct" id="P39015">
    <property type="interactions" value="156"/>
</dbReference>
<dbReference type="MINT" id="P39015"/>
<dbReference type="STRING" id="4932.YLR150W"/>
<dbReference type="iPTMnet" id="P39015"/>
<dbReference type="PaxDb" id="4932-YLR150W"/>
<dbReference type="PeptideAtlas" id="P39015"/>
<dbReference type="TopDownProteomics" id="P39015"/>
<dbReference type="EnsemblFungi" id="YLR150W_mRNA">
    <property type="protein sequence ID" value="YLR150W"/>
    <property type="gene ID" value="YLR150W"/>
</dbReference>
<dbReference type="GeneID" id="850843"/>
<dbReference type="KEGG" id="sce:YLR150W"/>
<dbReference type="AGR" id="SGD:S000004140"/>
<dbReference type="SGD" id="S000004140">
    <property type="gene designation" value="STM1"/>
</dbReference>
<dbReference type="VEuPathDB" id="FungiDB:YLR150W"/>
<dbReference type="eggNOG" id="ENOG502QS5P">
    <property type="taxonomic scope" value="Eukaryota"/>
</dbReference>
<dbReference type="HOGENOM" id="CLU_043312_2_0_1"/>
<dbReference type="InParanoid" id="P39015"/>
<dbReference type="OMA" id="KKWAGAK"/>
<dbReference type="OrthoDB" id="5426471at2759"/>
<dbReference type="BioCyc" id="YEAST:G3O-32286-MONOMER"/>
<dbReference type="Reactome" id="R-SCE-114608">
    <property type="pathway name" value="Platelet degranulation"/>
</dbReference>
<dbReference type="BioGRID-ORCS" id="850843">
    <property type="hits" value="9 hits in 10 CRISPR screens"/>
</dbReference>
<dbReference type="PRO" id="PR:P39015"/>
<dbReference type="Proteomes" id="UP000002311">
    <property type="component" value="Chromosome XII"/>
</dbReference>
<dbReference type="RNAct" id="P39015">
    <property type="molecule type" value="protein"/>
</dbReference>
<dbReference type="GO" id="GO:0005737">
    <property type="term" value="C:cytoplasm"/>
    <property type="evidence" value="ECO:0000314"/>
    <property type="project" value="SGD"/>
</dbReference>
<dbReference type="GO" id="GO:0005634">
    <property type="term" value="C:nucleus"/>
    <property type="evidence" value="ECO:0000318"/>
    <property type="project" value="GO_Central"/>
</dbReference>
<dbReference type="GO" id="GO:0048471">
    <property type="term" value="C:perinuclear region of cytoplasm"/>
    <property type="evidence" value="ECO:0007669"/>
    <property type="project" value="UniProtKB-SubCell"/>
</dbReference>
<dbReference type="GO" id="GO:0003677">
    <property type="term" value="F:DNA binding"/>
    <property type="evidence" value="ECO:0000314"/>
    <property type="project" value="SGD"/>
</dbReference>
<dbReference type="GO" id="GO:0043022">
    <property type="term" value="F:ribosome binding"/>
    <property type="evidence" value="ECO:0000314"/>
    <property type="project" value="UniProtKB"/>
</dbReference>
<dbReference type="GO" id="GO:0003723">
    <property type="term" value="F:RNA binding"/>
    <property type="evidence" value="ECO:0000318"/>
    <property type="project" value="GO_Central"/>
</dbReference>
<dbReference type="GO" id="GO:0042162">
    <property type="term" value="F:telomeric DNA binding"/>
    <property type="evidence" value="ECO:0000314"/>
    <property type="project" value="SGD"/>
</dbReference>
<dbReference type="GO" id="GO:0061770">
    <property type="term" value="F:translation elongation factor binding"/>
    <property type="evidence" value="ECO:0000353"/>
    <property type="project" value="UniProtKB"/>
</dbReference>
<dbReference type="GO" id="GO:0030371">
    <property type="term" value="F:translation repressor activity"/>
    <property type="evidence" value="ECO:0000314"/>
    <property type="project" value="UniProtKB"/>
</dbReference>
<dbReference type="GO" id="GO:0045142">
    <property type="term" value="F:triplex DNA binding"/>
    <property type="evidence" value="ECO:0000314"/>
    <property type="project" value="SGD"/>
</dbReference>
<dbReference type="GO" id="GO:0043066">
    <property type="term" value="P:negative regulation of apoptotic process"/>
    <property type="evidence" value="ECO:0000314"/>
    <property type="project" value="SGD"/>
</dbReference>
<dbReference type="GO" id="GO:0043558">
    <property type="term" value="P:regulation of translational initiation in response to stress"/>
    <property type="evidence" value="ECO:0000315"/>
    <property type="project" value="SGD"/>
</dbReference>
<dbReference type="GO" id="GO:0141014">
    <property type="term" value="P:ribosome hibernation"/>
    <property type="evidence" value="ECO:0000314"/>
    <property type="project" value="UniProtKB"/>
</dbReference>
<dbReference type="GO" id="GO:0000723">
    <property type="term" value="P:telomere maintenance"/>
    <property type="evidence" value="ECO:0000316"/>
    <property type="project" value="SGD"/>
</dbReference>
<dbReference type="GO" id="GO:0031929">
    <property type="term" value="P:TOR signaling"/>
    <property type="evidence" value="ECO:0000315"/>
    <property type="project" value="SGD"/>
</dbReference>
<dbReference type="GO" id="GO:0006414">
    <property type="term" value="P:translational elongation"/>
    <property type="evidence" value="ECO:0000315"/>
    <property type="project" value="SGD"/>
</dbReference>
<dbReference type="DisProt" id="DP00994"/>
<dbReference type="Gene3D" id="6.10.140.1040">
    <property type="match status" value="1"/>
</dbReference>
<dbReference type="InterPro" id="IPR006861">
    <property type="entry name" value="HABP4_PAIRBP1-bd"/>
</dbReference>
<dbReference type="InterPro" id="IPR019084">
    <property type="entry name" value="STM1-like_N"/>
</dbReference>
<dbReference type="Pfam" id="PF09598">
    <property type="entry name" value="Stm1_N"/>
    <property type="match status" value="1"/>
</dbReference>
<dbReference type="SMART" id="SM01233">
    <property type="entry name" value="HABP4_PAI-RBP1"/>
    <property type="match status" value="1"/>
</dbReference>